<evidence type="ECO:0000255" key="1">
    <source>
        <dbReference type="HAMAP-Rule" id="MF_01724"/>
    </source>
</evidence>
<proteinExistence type="inferred from homology"/>
<name>SSUB2_NOCFA</name>
<accession>Q5YYR7</accession>
<feature type="chain" id="PRO_0000279923" description="Aliphatic sulfonates import ATP-binding protein SsuB 2">
    <location>
        <begin position="1"/>
        <end position="240"/>
    </location>
</feature>
<feature type="domain" description="ABC transporter" evidence="1">
    <location>
        <begin position="2"/>
        <end position="218"/>
    </location>
</feature>
<feature type="binding site" evidence="1">
    <location>
        <begin position="34"/>
        <end position="41"/>
    </location>
    <ligand>
        <name>ATP</name>
        <dbReference type="ChEBI" id="CHEBI:30616"/>
    </ligand>
</feature>
<keyword id="KW-0067">ATP-binding</keyword>
<keyword id="KW-1003">Cell membrane</keyword>
<keyword id="KW-0472">Membrane</keyword>
<keyword id="KW-0547">Nucleotide-binding</keyword>
<keyword id="KW-1185">Reference proteome</keyword>
<keyword id="KW-1278">Translocase</keyword>
<keyword id="KW-0813">Transport</keyword>
<sequence>MVRTRELRRGFGDRTVLRGIDLDIARGEFVALLGRSGSGKSTLLRALAELDDAGTGSGELRVPSERAVVFQDSRLLPWARVLDNVILGLSGADAAARGRAALAEVGLAGRERAWPRELSGGEQQRVALARSLVREPELLLADEPFGALDALTRIRMHALLQDLCARHKPAVLLVTHDVDEAVLLADRVLVLQDGRLATDLRIELPRPRRHSAPEFIHARELLLAALGVDLAAPEEEKQAS</sequence>
<comment type="function">
    <text evidence="1">Part of the ABC transporter complex SsuABC involved in aliphatic sulfonates import. Responsible for energy coupling to the transport system.</text>
</comment>
<comment type="catalytic activity">
    <reaction evidence="1">
        <text>ATP + H2O + aliphatic sulfonate-[sulfonate-binding protein]Side 1 = ADP + phosphate + aliphatic sulfonateSide 2 + [sulfonate-binding protein]Side 1.</text>
        <dbReference type="EC" id="7.6.2.14"/>
    </reaction>
</comment>
<comment type="subunit">
    <text evidence="1">The complex is composed of two ATP-binding proteins (SsuB), two transmembrane proteins (SsuC) and a solute-binding protein (SsuA).</text>
</comment>
<comment type="subcellular location">
    <subcellularLocation>
        <location evidence="1">Cell membrane</location>
        <topology evidence="1">Peripheral membrane protein</topology>
    </subcellularLocation>
</comment>
<comment type="similarity">
    <text evidence="1">Belongs to the ABC transporter superfamily. Aliphatic sulfonates importer (TC 3.A.1.17.2) family.</text>
</comment>
<gene>
    <name evidence="1" type="primary">ssuB2</name>
    <name type="ordered locus">NFA_18280</name>
</gene>
<protein>
    <recommendedName>
        <fullName evidence="1">Aliphatic sulfonates import ATP-binding protein SsuB 2</fullName>
        <ecNumber evidence="1">7.6.2.14</ecNumber>
    </recommendedName>
</protein>
<dbReference type="EC" id="7.6.2.14" evidence="1"/>
<dbReference type="EMBL" id="AP006618">
    <property type="protein sequence ID" value="BAD56674.1"/>
    <property type="molecule type" value="Genomic_DNA"/>
</dbReference>
<dbReference type="SMR" id="Q5YYR7"/>
<dbReference type="STRING" id="247156.NFA_18280"/>
<dbReference type="KEGG" id="nfa:NFA_18280"/>
<dbReference type="eggNOG" id="COG1116">
    <property type="taxonomic scope" value="Bacteria"/>
</dbReference>
<dbReference type="HOGENOM" id="CLU_000604_1_22_11"/>
<dbReference type="Proteomes" id="UP000006820">
    <property type="component" value="Chromosome"/>
</dbReference>
<dbReference type="GO" id="GO:0005886">
    <property type="term" value="C:plasma membrane"/>
    <property type="evidence" value="ECO:0007669"/>
    <property type="project" value="UniProtKB-SubCell"/>
</dbReference>
<dbReference type="GO" id="GO:0005524">
    <property type="term" value="F:ATP binding"/>
    <property type="evidence" value="ECO:0007669"/>
    <property type="project" value="UniProtKB-KW"/>
</dbReference>
<dbReference type="GO" id="GO:0016887">
    <property type="term" value="F:ATP hydrolysis activity"/>
    <property type="evidence" value="ECO:0007669"/>
    <property type="project" value="InterPro"/>
</dbReference>
<dbReference type="Gene3D" id="3.40.50.300">
    <property type="entry name" value="P-loop containing nucleotide triphosphate hydrolases"/>
    <property type="match status" value="1"/>
</dbReference>
<dbReference type="InterPro" id="IPR003593">
    <property type="entry name" value="AAA+_ATPase"/>
</dbReference>
<dbReference type="InterPro" id="IPR003439">
    <property type="entry name" value="ABC_transporter-like_ATP-bd"/>
</dbReference>
<dbReference type="InterPro" id="IPR017871">
    <property type="entry name" value="ABC_transporter-like_CS"/>
</dbReference>
<dbReference type="InterPro" id="IPR050166">
    <property type="entry name" value="ABC_transporter_ATP-bind"/>
</dbReference>
<dbReference type="InterPro" id="IPR027417">
    <property type="entry name" value="P-loop_NTPase"/>
</dbReference>
<dbReference type="PANTHER" id="PTHR42788:SF17">
    <property type="entry name" value="ALIPHATIC SULFONATES IMPORT ATP-BINDING PROTEIN SSUB"/>
    <property type="match status" value="1"/>
</dbReference>
<dbReference type="PANTHER" id="PTHR42788">
    <property type="entry name" value="TAURINE IMPORT ATP-BINDING PROTEIN-RELATED"/>
    <property type="match status" value="1"/>
</dbReference>
<dbReference type="Pfam" id="PF00005">
    <property type="entry name" value="ABC_tran"/>
    <property type="match status" value="1"/>
</dbReference>
<dbReference type="SMART" id="SM00382">
    <property type="entry name" value="AAA"/>
    <property type="match status" value="1"/>
</dbReference>
<dbReference type="SUPFAM" id="SSF52540">
    <property type="entry name" value="P-loop containing nucleoside triphosphate hydrolases"/>
    <property type="match status" value="1"/>
</dbReference>
<dbReference type="PROSITE" id="PS00211">
    <property type="entry name" value="ABC_TRANSPORTER_1"/>
    <property type="match status" value="1"/>
</dbReference>
<dbReference type="PROSITE" id="PS50893">
    <property type="entry name" value="ABC_TRANSPORTER_2"/>
    <property type="match status" value="1"/>
</dbReference>
<dbReference type="PROSITE" id="PS51291">
    <property type="entry name" value="SSUB"/>
    <property type="match status" value="1"/>
</dbReference>
<organism>
    <name type="scientific">Nocardia farcinica (strain IFM 10152)</name>
    <dbReference type="NCBI Taxonomy" id="247156"/>
    <lineage>
        <taxon>Bacteria</taxon>
        <taxon>Bacillati</taxon>
        <taxon>Actinomycetota</taxon>
        <taxon>Actinomycetes</taxon>
        <taxon>Mycobacteriales</taxon>
        <taxon>Nocardiaceae</taxon>
        <taxon>Nocardia</taxon>
    </lineage>
</organism>
<reference key="1">
    <citation type="journal article" date="2004" name="Proc. Natl. Acad. Sci. U.S.A.">
        <title>The complete genomic sequence of Nocardia farcinica IFM 10152.</title>
        <authorList>
            <person name="Ishikawa J."/>
            <person name="Yamashita A."/>
            <person name="Mikami Y."/>
            <person name="Hoshino Y."/>
            <person name="Kurita H."/>
            <person name="Hotta K."/>
            <person name="Shiba T."/>
            <person name="Hattori M."/>
        </authorList>
    </citation>
    <scope>NUCLEOTIDE SEQUENCE [LARGE SCALE GENOMIC DNA]</scope>
    <source>
        <strain>IFM 10152</strain>
    </source>
</reference>